<feature type="chain" id="PRO_0000296102" description="Cyclin-dependent kinase C-3">
    <location>
        <begin position="1"/>
        <end position="324"/>
    </location>
</feature>
<feature type="domain" description="Protein kinase" evidence="2">
    <location>
        <begin position="27"/>
        <end position="320"/>
    </location>
</feature>
<feature type="active site" description="Proton acceptor" evidence="2 3">
    <location>
        <position position="160"/>
    </location>
</feature>
<feature type="binding site" evidence="2">
    <location>
        <begin position="33"/>
        <end position="41"/>
    </location>
    <ligand>
        <name>ATP</name>
        <dbReference type="ChEBI" id="CHEBI:30616"/>
    </ligand>
</feature>
<feature type="binding site" evidence="2">
    <location>
        <position position="56"/>
    </location>
    <ligand>
        <name>ATP</name>
        <dbReference type="ChEBI" id="CHEBI:30616"/>
    </ligand>
</feature>
<feature type="modified residue" description="Phosphothreonine" evidence="1">
    <location>
        <position position="37"/>
    </location>
</feature>
<feature type="modified residue" description="Phosphotyrosine" evidence="1">
    <location>
        <position position="38"/>
    </location>
</feature>
<feature type="modified residue" description="Phosphothreonine" evidence="1">
    <location>
        <position position="193"/>
    </location>
</feature>
<dbReference type="EC" id="2.7.11.22"/>
<dbReference type="EC" id="2.7.11.23"/>
<dbReference type="EMBL" id="AP004662">
    <property type="protein sequence ID" value="BAD09782.1"/>
    <property type="status" value="ALT_SEQ"/>
    <property type="molecule type" value="Genomic_DNA"/>
</dbReference>
<dbReference type="EMBL" id="AP008214">
    <property type="protein sequence ID" value="BAF23871.1"/>
    <property type="status" value="ALT_SEQ"/>
    <property type="molecule type" value="Genomic_DNA"/>
</dbReference>
<dbReference type="EMBL" id="AP014964">
    <property type="status" value="NOT_ANNOTATED_CDS"/>
    <property type="molecule type" value="Genomic_DNA"/>
</dbReference>
<dbReference type="EMBL" id="CM000145">
    <property type="status" value="NOT_ANNOTATED_CDS"/>
    <property type="molecule type" value="Genomic_DNA"/>
</dbReference>
<dbReference type="SMR" id="Q6ZAG3"/>
<dbReference type="FunCoup" id="Q6ZAG3">
    <property type="interactions" value="1922"/>
</dbReference>
<dbReference type="STRING" id="39947.Q6ZAG3"/>
<dbReference type="PaxDb" id="39947-Q6ZAG3"/>
<dbReference type="GeneID" id="9268645"/>
<dbReference type="KEGG" id="osa:9268645"/>
<dbReference type="eggNOG" id="KOG0600">
    <property type="taxonomic scope" value="Eukaryota"/>
</dbReference>
<dbReference type="InParanoid" id="Q6ZAG3"/>
<dbReference type="OrthoDB" id="1732493at2759"/>
<dbReference type="Proteomes" id="UP000000763">
    <property type="component" value="Chromosome 8"/>
</dbReference>
<dbReference type="Proteomes" id="UP000007752">
    <property type="component" value="Chromosome 8"/>
</dbReference>
<dbReference type="Proteomes" id="UP000059680">
    <property type="component" value="Chromosome 8"/>
</dbReference>
<dbReference type="GO" id="GO:0000307">
    <property type="term" value="C:cyclin-dependent protein kinase holoenzyme complex"/>
    <property type="evidence" value="ECO:0000318"/>
    <property type="project" value="GO_Central"/>
</dbReference>
<dbReference type="GO" id="GO:0005634">
    <property type="term" value="C:nucleus"/>
    <property type="evidence" value="ECO:0000318"/>
    <property type="project" value="GO_Central"/>
</dbReference>
<dbReference type="GO" id="GO:0005524">
    <property type="term" value="F:ATP binding"/>
    <property type="evidence" value="ECO:0007669"/>
    <property type="project" value="UniProtKB-KW"/>
</dbReference>
<dbReference type="GO" id="GO:0004693">
    <property type="term" value="F:cyclin-dependent protein serine/threonine kinase activity"/>
    <property type="evidence" value="ECO:0007669"/>
    <property type="project" value="UniProtKB-EC"/>
</dbReference>
<dbReference type="GO" id="GO:0106310">
    <property type="term" value="F:protein serine kinase activity"/>
    <property type="evidence" value="ECO:0007669"/>
    <property type="project" value="RHEA"/>
</dbReference>
<dbReference type="GO" id="GO:0008353">
    <property type="term" value="F:RNA polymerase II CTD heptapeptide repeat kinase activity"/>
    <property type="evidence" value="ECO:0000318"/>
    <property type="project" value="GO_Central"/>
</dbReference>
<dbReference type="GO" id="GO:0032968">
    <property type="term" value="P:positive regulation of transcription elongation by RNA polymerase II"/>
    <property type="evidence" value="ECO:0000318"/>
    <property type="project" value="GO_Central"/>
</dbReference>
<dbReference type="CDD" id="cd07840">
    <property type="entry name" value="STKc_CDK9_like"/>
    <property type="match status" value="1"/>
</dbReference>
<dbReference type="FunFam" id="1.10.510.10:FF:000415">
    <property type="entry name" value="CMGC/CDK/CRK7 protein kinase, variant"/>
    <property type="match status" value="1"/>
</dbReference>
<dbReference type="FunFam" id="3.30.200.20:FF:000662">
    <property type="entry name" value="Cyclin-dependent kinase C-3"/>
    <property type="match status" value="1"/>
</dbReference>
<dbReference type="Gene3D" id="3.30.200.20">
    <property type="entry name" value="Phosphorylase Kinase, domain 1"/>
    <property type="match status" value="1"/>
</dbReference>
<dbReference type="Gene3D" id="1.10.510.10">
    <property type="entry name" value="Transferase(Phosphotransferase) domain 1"/>
    <property type="match status" value="1"/>
</dbReference>
<dbReference type="InterPro" id="IPR050108">
    <property type="entry name" value="CDK"/>
</dbReference>
<dbReference type="InterPro" id="IPR011009">
    <property type="entry name" value="Kinase-like_dom_sf"/>
</dbReference>
<dbReference type="InterPro" id="IPR000719">
    <property type="entry name" value="Prot_kinase_dom"/>
</dbReference>
<dbReference type="InterPro" id="IPR017441">
    <property type="entry name" value="Protein_kinase_ATP_BS"/>
</dbReference>
<dbReference type="InterPro" id="IPR008271">
    <property type="entry name" value="Ser/Thr_kinase_AS"/>
</dbReference>
<dbReference type="PANTHER" id="PTHR24056">
    <property type="entry name" value="CELL DIVISION PROTEIN KINASE"/>
    <property type="match status" value="1"/>
</dbReference>
<dbReference type="PANTHER" id="PTHR24056:SF560">
    <property type="entry name" value="CYCLIN-DEPENDENT KINASE C-3"/>
    <property type="match status" value="1"/>
</dbReference>
<dbReference type="Pfam" id="PF00069">
    <property type="entry name" value="Pkinase"/>
    <property type="match status" value="1"/>
</dbReference>
<dbReference type="SMART" id="SM00220">
    <property type="entry name" value="S_TKc"/>
    <property type="match status" value="1"/>
</dbReference>
<dbReference type="SUPFAM" id="SSF56112">
    <property type="entry name" value="Protein kinase-like (PK-like)"/>
    <property type="match status" value="1"/>
</dbReference>
<dbReference type="PROSITE" id="PS00107">
    <property type="entry name" value="PROTEIN_KINASE_ATP"/>
    <property type="match status" value="1"/>
</dbReference>
<dbReference type="PROSITE" id="PS50011">
    <property type="entry name" value="PROTEIN_KINASE_DOM"/>
    <property type="match status" value="1"/>
</dbReference>
<dbReference type="PROSITE" id="PS00108">
    <property type="entry name" value="PROTEIN_KINASE_ST"/>
    <property type="match status" value="1"/>
</dbReference>
<reference key="1">
    <citation type="journal article" date="2005" name="Nature">
        <title>The map-based sequence of the rice genome.</title>
        <authorList>
            <consortium name="International rice genome sequencing project (IRGSP)"/>
        </authorList>
    </citation>
    <scope>NUCLEOTIDE SEQUENCE [LARGE SCALE GENOMIC DNA]</scope>
    <source>
        <strain>cv. Nipponbare</strain>
    </source>
</reference>
<reference key="2">
    <citation type="journal article" date="2008" name="Nucleic Acids Res.">
        <title>The rice annotation project database (RAP-DB): 2008 update.</title>
        <authorList>
            <consortium name="The rice annotation project (RAP)"/>
        </authorList>
    </citation>
    <scope>GENOME REANNOTATION</scope>
    <source>
        <strain>cv. Nipponbare</strain>
    </source>
</reference>
<reference key="3">
    <citation type="journal article" date="2013" name="Rice">
        <title>Improvement of the Oryza sativa Nipponbare reference genome using next generation sequence and optical map data.</title>
        <authorList>
            <person name="Kawahara Y."/>
            <person name="de la Bastide M."/>
            <person name="Hamilton J.P."/>
            <person name="Kanamori H."/>
            <person name="McCombie W.R."/>
            <person name="Ouyang S."/>
            <person name="Schwartz D.C."/>
            <person name="Tanaka T."/>
            <person name="Wu J."/>
            <person name="Zhou S."/>
            <person name="Childs K.L."/>
            <person name="Davidson R.M."/>
            <person name="Lin H."/>
            <person name="Quesada-Ocampo L."/>
            <person name="Vaillancourt B."/>
            <person name="Sakai H."/>
            <person name="Lee S.S."/>
            <person name="Kim J."/>
            <person name="Numa H."/>
            <person name="Itoh T."/>
            <person name="Buell C.R."/>
            <person name="Matsumoto T."/>
        </authorList>
    </citation>
    <scope>GENOME REANNOTATION</scope>
    <source>
        <strain>cv. Nipponbare</strain>
    </source>
</reference>
<reference key="4">
    <citation type="journal article" date="2005" name="PLoS Biol.">
        <title>The genomes of Oryza sativa: a history of duplications.</title>
        <authorList>
            <person name="Yu J."/>
            <person name="Wang J."/>
            <person name="Lin W."/>
            <person name="Li S."/>
            <person name="Li H."/>
            <person name="Zhou J."/>
            <person name="Ni P."/>
            <person name="Dong W."/>
            <person name="Hu S."/>
            <person name="Zeng C."/>
            <person name="Zhang J."/>
            <person name="Zhang Y."/>
            <person name="Li R."/>
            <person name="Xu Z."/>
            <person name="Li S."/>
            <person name="Li X."/>
            <person name="Zheng H."/>
            <person name="Cong L."/>
            <person name="Lin L."/>
            <person name="Yin J."/>
            <person name="Geng J."/>
            <person name="Li G."/>
            <person name="Shi J."/>
            <person name="Liu J."/>
            <person name="Lv H."/>
            <person name="Li J."/>
            <person name="Wang J."/>
            <person name="Deng Y."/>
            <person name="Ran L."/>
            <person name="Shi X."/>
            <person name="Wang X."/>
            <person name="Wu Q."/>
            <person name="Li C."/>
            <person name="Ren X."/>
            <person name="Wang J."/>
            <person name="Wang X."/>
            <person name="Li D."/>
            <person name="Liu D."/>
            <person name="Zhang X."/>
            <person name="Ji Z."/>
            <person name="Zhao W."/>
            <person name="Sun Y."/>
            <person name="Zhang Z."/>
            <person name="Bao J."/>
            <person name="Han Y."/>
            <person name="Dong L."/>
            <person name="Ji J."/>
            <person name="Chen P."/>
            <person name="Wu S."/>
            <person name="Liu J."/>
            <person name="Xiao Y."/>
            <person name="Bu D."/>
            <person name="Tan J."/>
            <person name="Yang L."/>
            <person name="Ye C."/>
            <person name="Zhang J."/>
            <person name="Xu J."/>
            <person name="Zhou Y."/>
            <person name="Yu Y."/>
            <person name="Zhang B."/>
            <person name="Zhuang S."/>
            <person name="Wei H."/>
            <person name="Liu B."/>
            <person name="Lei M."/>
            <person name="Yu H."/>
            <person name="Li Y."/>
            <person name="Xu H."/>
            <person name="Wei S."/>
            <person name="He X."/>
            <person name="Fang L."/>
            <person name="Zhang Z."/>
            <person name="Zhang Y."/>
            <person name="Huang X."/>
            <person name="Su Z."/>
            <person name="Tong W."/>
            <person name="Li J."/>
            <person name="Tong Z."/>
            <person name="Li S."/>
            <person name="Ye J."/>
            <person name="Wang L."/>
            <person name="Fang L."/>
            <person name="Lei T."/>
            <person name="Chen C.-S."/>
            <person name="Chen H.-C."/>
            <person name="Xu Z."/>
            <person name="Li H."/>
            <person name="Huang H."/>
            <person name="Zhang F."/>
            <person name="Xu H."/>
            <person name="Li N."/>
            <person name="Zhao C."/>
            <person name="Li S."/>
            <person name="Dong L."/>
            <person name="Huang Y."/>
            <person name="Li L."/>
            <person name="Xi Y."/>
            <person name="Qi Q."/>
            <person name="Li W."/>
            <person name="Zhang B."/>
            <person name="Hu W."/>
            <person name="Zhang Y."/>
            <person name="Tian X."/>
            <person name="Jiao Y."/>
            <person name="Liang X."/>
            <person name="Jin J."/>
            <person name="Gao L."/>
            <person name="Zheng W."/>
            <person name="Hao B."/>
            <person name="Liu S.-M."/>
            <person name="Wang W."/>
            <person name="Yuan L."/>
            <person name="Cao M."/>
            <person name="McDermott J."/>
            <person name="Samudrala R."/>
            <person name="Wang J."/>
            <person name="Wong G.K.-S."/>
            <person name="Yang H."/>
        </authorList>
    </citation>
    <scope>NUCLEOTIDE SEQUENCE [LARGE SCALE GENOMIC DNA]</scope>
    <source>
        <strain>cv. Nipponbare</strain>
    </source>
</reference>
<reference key="5">
    <citation type="journal article" date="2007" name="Plant Mol. Biol.">
        <title>Genome-wide identification and expression analysis of rice cell cycle genes.</title>
        <authorList>
            <person name="Guo J."/>
            <person name="Song J."/>
            <person name="Wang F."/>
            <person name="Zhang X.S."/>
        </authorList>
    </citation>
    <scope>GENE FAMILY</scope>
</reference>
<accession>Q6ZAG3</accession>
<accession>Q0J594</accession>
<evidence type="ECO:0000250" key="1"/>
<evidence type="ECO:0000255" key="2">
    <source>
        <dbReference type="PROSITE-ProRule" id="PRU00159"/>
    </source>
</evidence>
<evidence type="ECO:0000255" key="3">
    <source>
        <dbReference type="PROSITE-ProRule" id="PRU10027"/>
    </source>
</evidence>
<evidence type="ECO:0000305" key="4"/>
<proteinExistence type="inferred from homology"/>
<organism>
    <name type="scientific">Oryza sativa subsp. japonica</name>
    <name type="common">Rice</name>
    <dbReference type="NCBI Taxonomy" id="39947"/>
    <lineage>
        <taxon>Eukaryota</taxon>
        <taxon>Viridiplantae</taxon>
        <taxon>Streptophyta</taxon>
        <taxon>Embryophyta</taxon>
        <taxon>Tracheophyta</taxon>
        <taxon>Spermatophyta</taxon>
        <taxon>Magnoliopsida</taxon>
        <taxon>Liliopsida</taxon>
        <taxon>Poales</taxon>
        <taxon>Poaceae</taxon>
        <taxon>BOP clade</taxon>
        <taxon>Oryzoideae</taxon>
        <taxon>Oryzeae</taxon>
        <taxon>Oryzinae</taxon>
        <taxon>Oryza</taxon>
        <taxon>Oryza sativa</taxon>
    </lineage>
</organism>
<name>CDKC3_ORYSJ</name>
<comment type="catalytic activity">
    <reaction>
        <text>L-seryl-[protein] + ATP = O-phospho-L-seryl-[protein] + ADP + H(+)</text>
        <dbReference type="Rhea" id="RHEA:17989"/>
        <dbReference type="Rhea" id="RHEA-COMP:9863"/>
        <dbReference type="Rhea" id="RHEA-COMP:11604"/>
        <dbReference type="ChEBI" id="CHEBI:15378"/>
        <dbReference type="ChEBI" id="CHEBI:29999"/>
        <dbReference type="ChEBI" id="CHEBI:30616"/>
        <dbReference type="ChEBI" id="CHEBI:83421"/>
        <dbReference type="ChEBI" id="CHEBI:456216"/>
        <dbReference type="EC" id="2.7.11.22"/>
    </reaction>
</comment>
<comment type="catalytic activity">
    <reaction>
        <text>L-threonyl-[protein] + ATP = O-phospho-L-threonyl-[protein] + ADP + H(+)</text>
        <dbReference type="Rhea" id="RHEA:46608"/>
        <dbReference type="Rhea" id="RHEA-COMP:11060"/>
        <dbReference type="Rhea" id="RHEA-COMP:11605"/>
        <dbReference type="ChEBI" id="CHEBI:15378"/>
        <dbReference type="ChEBI" id="CHEBI:30013"/>
        <dbReference type="ChEBI" id="CHEBI:30616"/>
        <dbReference type="ChEBI" id="CHEBI:61977"/>
        <dbReference type="ChEBI" id="CHEBI:456216"/>
        <dbReference type="EC" id="2.7.11.22"/>
    </reaction>
</comment>
<comment type="catalytic activity">
    <reaction>
        <text>[DNA-directed RNA polymerase] + ATP = phospho-[DNA-directed RNA polymerase] + ADP + H(+)</text>
        <dbReference type="Rhea" id="RHEA:10216"/>
        <dbReference type="Rhea" id="RHEA-COMP:11321"/>
        <dbReference type="Rhea" id="RHEA-COMP:11322"/>
        <dbReference type="ChEBI" id="CHEBI:15378"/>
        <dbReference type="ChEBI" id="CHEBI:30616"/>
        <dbReference type="ChEBI" id="CHEBI:43176"/>
        <dbReference type="ChEBI" id="CHEBI:68546"/>
        <dbReference type="ChEBI" id="CHEBI:456216"/>
        <dbReference type="EC" id="2.7.11.23"/>
    </reaction>
</comment>
<comment type="similarity">
    <text evidence="4">Belongs to the protein kinase superfamily. CMGC Ser/Thr protein kinase family. CDC2/CDKX subfamily.</text>
</comment>
<comment type="sequence caution" evidence="4">
    <conflict type="erroneous gene model prediction">
        <sequence resource="EMBL-CDS" id="BAD09782"/>
    </conflict>
</comment>
<comment type="sequence caution" evidence="4">
    <conflict type="erroneous gene model prediction">
        <sequence resource="EMBL-CDS" id="BAF23871"/>
    </conflict>
</comment>
<keyword id="KW-0067">ATP-binding</keyword>
<keyword id="KW-0418">Kinase</keyword>
<keyword id="KW-0547">Nucleotide-binding</keyword>
<keyword id="KW-0597">Phosphoprotein</keyword>
<keyword id="KW-1185">Reference proteome</keyword>
<keyword id="KW-0723">Serine/threonine-protein kinase</keyword>
<keyword id="KW-0808">Transferase</keyword>
<protein>
    <recommendedName>
        <fullName>Cyclin-dependent kinase C-3</fullName>
        <shortName>CDKC;3</shortName>
        <ecNumber>2.7.11.22</ecNumber>
        <ecNumber>2.7.11.23</ecNumber>
    </recommendedName>
</protein>
<sequence>MDGEEAPPGALNLADYAPAGARTVDCFRRIRKIGEGTYGEVFEAMDIITGERAALKKIKLDDGKEGFPRQILREIKLLKKLDHENIIRLKEIVVSPGTAHGAGGSDDYMYRGDIYMVFEYMDHDLKKVLHHSTPSQVKYYMEQLLKGLHYCHVNNVLHRDIKGANLLISGGGKLLKLADFGLARPFTRDGSFTNHVITLWYRPPELLLGATNYAEAVDIWSVGCIFAEFLLRKPLFPGRTEQEQLSKIFELCGFPNEENWPGVSKLPLYKTIRPTTPTKRRLRDIFHNFDSHAVDLIDRMLILNPTERISAHDALCAAYFITKM</sequence>
<gene>
    <name type="primary">CDKC-1</name>
    <name type="ordered locus">Os08g0453800</name>
    <name type="ordered locus">LOC_Os08g35220</name>
    <name type="ORF">OsJ_026440</name>
    <name type="ORF">P0048G02.5</name>
</gene>